<name>NUOD_GEOMG</name>
<gene>
    <name evidence="1" type="primary">nuoD</name>
    <name type="ordered locus">Gmet_3352</name>
</gene>
<feature type="chain" id="PRO_0000357823" description="NADH-quinone oxidoreductase subunit D">
    <location>
        <begin position="1"/>
        <end position="390"/>
    </location>
</feature>
<accession>Q39QB0</accession>
<reference key="1">
    <citation type="journal article" date="2009" name="BMC Microbiol.">
        <title>The genome sequence of Geobacter metallireducens: features of metabolism, physiology and regulation common and dissimilar to Geobacter sulfurreducens.</title>
        <authorList>
            <person name="Aklujkar M."/>
            <person name="Krushkal J."/>
            <person name="DiBartolo G."/>
            <person name="Lapidus A."/>
            <person name="Land M.L."/>
            <person name="Lovley D.R."/>
        </authorList>
    </citation>
    <scope>NUCLEOTIDE SEQUENCE [LARGE SCALE GENOMIC DNA]</scope>
    <source>
        <strain>ATCC 53774 / DSM 7210 / GS-15</strain>
    </source>
</reference>
<protein>
    <recommendedName>
        <fullName evidence="1">NADH-quinone oxidoreductase subunit D</fullName>
        <ecNumber evidence="1">7.1.1.-</ecNumber>
    </recommendedName>
    <alternativeName>
        <fullName evidence="1">NADH dehydrogenase I subunit D</fullName>
    </alternativeName>
    <alternativeName>
        <fullName evidence="1">NDH-1 subunit D</fullName>
    </alternativeName>
</protein>
<keyword id="KW-0997">Cell inner membrane</keyword>
<keyword id="KW-1003">Cell membrane</keyword>
<keyword id="KW-0472">Membrane</keyword>
<keyword id="KW-0520">NAD</keyword>
<keyword id="KW-0874">Quinone</keyword>
<keyword id="KW-1185">Reference proteome</keyword>
<keyword id="KW-1278">Translocase</keyword>
<keyword id="KW-0813">Transport</keyword>
<keyword id="KW-0830">Ubiquinone</keyword>
<evidence type="ECO:0000255" key="1">
    <source>
        <dbReference type="HAMAP-Rule" id="MF_01358"/>
    </source>
</evidence>
<comment type="function">
    <text evidence="1">NDH-1 shuttles electrons from NADH, via FMN and iron-sulfur (Fe-S) centers, to quinones in the respiratory chain. The immediate electron acceptor for the enzyme in this species is believed to be ubiquinone. Couples the redox reaction to proton translocation (for every two electrons transferred, four hydrogen ions are translocated across the cytoplasmic membrane), and thus conserves the redox energy in a proton gradient.</text>
</comment>
<comment type="catalytic activity">
    <reaction evidence="1">
        <text>a quinone + NADH + 5 H(+)(in) = a quinol + NAD(+) + 4 H(+)(out)</text>
        <dbReference type="Rhea" id="RHEA:57888"/>
        <dbReference type="ChEBI" id="CHEBI:15378"/>
        <dbReference type="ChEBI" id="CHEBI:24646"/>
        <dbReference type="ChEBI" id="CHEBI:57540"/>
        <dbReference type="ChEBI" id="CHEBI:57945"/>
        <dbReference type="ChEBI" id="CHEBI:132124"/>
    </reaction>
</comment>
<comment type="subunit">
    <text evidence="1">NDH-1 is composed of 14 different subunits. Subunits NuoB, C, D, E, F, and G constitute the peripheral sector of the complex.</text>
</comment>
<comment type="subcellular location">
    <subcellularLocation>
        <location evidence="1">Cell inner membrane</location>
        <topology evidence="1">Peripheral membrane protein</topology>
        <orientation evidence="1">Cytoplasmic side</orientation>
    </subcellularLocation>
</comment>
<comment type="similarity">
    <text evidence="1">Belongs to the complex I 49 kDa subunit family.</text>
</comment>
<sequence>MASTEIMTVNMGPQHPSTHGVLRLVVELDGEIIQKITPHIGYLHRGVEKLSEHRTYHQTIPLTDRLDYLAPMHNNLGYVLAVEKLLGIEVPERAQTIRVILAELTRLKSHLVWVACHALDIGAMTVFIYAFREREMVMSLYEKISGARMTSSYFRVGGLSSDVYDGFEKDVREIVDTFPGHFDTYEGLLTKNTIWLNRTVGNGVISAEDAIDYGITGPALRGSGVDWDLRRDNPYSGYEKYQFKVPVGEKCDTFDRYKVRLVEMREAVNIIRQALDSLKPGPVLADAPQVTYPPKENVYNTIEGLIHHFKIASEGFPVPEGEVYQGVENPKGELGYYIVSDGGNKPYRMRIRPPSFVNLGAIEKMAKGSMIADLVAVIGTLDIVLGEIDR</sequence>
<proteinExistence type="inferred from homology"/>
<dbReference type="EC" id="7.1.1.-" evidence="1"/>
<dbReference type="EMBL" id="CP000148">
    <property type="protein sequence ID" value="ABB33564.1"/>
    <property type="molecule type" value="Genomic_DNA"/>
</dbReference>
<dbReference type="RefSeq" id="WP_004512578.1">
    <property type="nucleotide sequence ID" value="NC_007517.1"/>
</dbReference>
<dbReference type="SMR" id="Q39QB0"/>
<dbReference type="STRING" id="269799.Gmet_3352"/>
<dbReference type="KEGG" id="gme:Gmet_3352"/>
<dbReference type="eggNOG" id="COG0649">
    <property type="taxonomic scope" value="Bacteria"/>
</dbReference>
<dbReference type="HOGENOM" id="CLU_015134_1_2_7"/>
<dbReference type="Proteomes" id="UP000007073">
    <property type="component" value="Chromosome"/>
</dbReference>
<dbReference type="GO" id="GO:0005886">
    <property type="term" value="C:plasma membrane"/>
    <property type="evidence" value="ECO:0007669"/>
    <property type="project" value="UniProtKB-SubCell"/>
</dbReference>
<dbReference type="GO" id="GO:0051287">
    <property type="term" value="F:NAD binding"/>
    <property type="evidence" value="ECO:0007669"/>
    <property type="project" value="InterPro"/>
</dbReference>
<dbReference type="GO" id="GO:0050136">
    <property type="term" value="F:NADH:ubiquinone reductase (non-electrogenic) activity"/>
    <property type="evidence" value="ECO:0007669"/>
    <property type="project" value="UniProtKB-UniRule"/>
</dbReference>
<dbReference type="GO" id="GO:0048038">
    <property type="term" value="F:quinone binding"/>
    <property type="evidence" value="ECO:0007669"/>
    <property type="project" value="UniProtKB-KW"/>
</dbReference>
<dbReference type="FunFam" id="1.10.645.10:FF:000005">
    <property type="entry name" value="NADH-quinone oxidoreductase subunit D"/>
    <property type="match status" value="1"/>
</dbReference>
<dbReference type="Gene3D" id="1.10.645.10">
    <property type="entry name" value="Cytochrome-c3 Hydrogenase, chain B"/>
    <property type="match status" value="1"/>
</dbReference>
<dbReference type="HAMAP" id="MF_01358">
    <property type="entry name" value="NDH1_NuoD"/>
    <property type="match status" value="1"/>
</dbReference>
<dbReference type="InterPro" id="IPR001135">
    <property type="entry name" value="NADH_Q_OxRdtase_suD"/>
</dbReference>
<dbReference type="InterPro" id="IPR014029">
    <property type="entry name" value="NADH_UbQ_OxRdtase_49kDa_CS"/>
</dbReference>
<dbReference type="InterPro" id="IPR022885">
    <property type="entry name" value="NDH1_su_D/H"/>
</dbReference>
<dbReference type="InterPro" id="IPR029014">
    <property type="entry name" value="NiFe-Hase_large"/>
</dbReference>
<dbReference type="NCBIfam" id="TIGR01962">
    <property type="entry name" value="NuoD"/>
    <property type="match status" value="1"/>
</dbReference>
<dbReference type="NCBIfam" id="NF004739">
    <property type="entry name" value="PRK06075.1"/>
    <property type="match status" value="1"/>
</dbReference>
<dbReference type="PANTHER" id="PTHR11993:SF10">
    <property type="entry name" value="NADH DEHYDROGENASE [UBIQUINONE] IRON-SULFUR PROTEIN 2, MITOCHONDRIAL"/>
    <property type="match status" value="1"/>
</dbReference>
<dbReference type="PANTHER" id="PTHR11993">
    <property type="entry name" value="NADH-UBIQUINONE OXIDOREDUCTASE 49 KDA SUBUNIT"/>
    <property type="match status" value="1"/>
</dbReference>
<dbReference type="Pfam" id="PF00346">
    <property type="entry name" value="Complex1_49kDa"/>
    <property type="match status" value="1"/>
</dbReference>
<dbReference type="SUPFAM" id="SSF56762">
    <property type="entry name" value="HydB/Nqo4-like"/>
    <property type="match status" value="1"/>
</dbReference>
<dbReference type="PROSITE" id="PS00535">
    <property type="entry name" value="COMPLEX1_49K"/>
    <property type="match status" value="1"/>
</dbReference>
<organism>
    <name type="scientific">Geobacter metallireducens (strain ATCC 53774 / DSM 7210 / GS-15)</name>
    <dbReference type="NCBI Taxonomy" id="269799"/>
    <lineage>
        <taxon>Bacteria</taxon>
        <taxon>Pseudomonadati</taxon>
        <taxon>Thermodesulfobacteriota</taxon>
        <taxon>Desulfuromonadia</taxon>
        <taxon>Geobacterales</taxon>
        <taxon>Geobacteraceae</taxon>
        <taxon>Geobacter</taxon>
    </lineage>
</organism>